<feature type="initiator methionine" description="Removed" evidence="1">
    <location>
        <position position="1"/>
    </location>
</feature>
<feature type="chain" id="PRO_0000290001" description="Large ribosomal subunit protein uL4">
    <location>
        <begin position="2"/>
        <end position="427"/>
    </location>
</feature>
<feature type="region of interest" description="Disordered" evidence="4">
    <location>
        <begin position="369"/>
        <end position="427"/>
    </location>
</feature>
<feature type="compositionally biased region" description="Basic residues" evidence="4">
    <location>
        <begin position="377"/>
        <end position="397"/>
    </location>
</feature>
<feature type="compositionally biased region" description="Basic and acidic residues" evidence="4">
    <location>
        <begin position="407"/>
        <end position="427"/>
    </location>
</feature>
<feature type="modified residue" description="N-acetylalanine" evidence="1">
    <location>
        <position position="2"/>
    </location>
</feature>
<feature type="modified residue" description="N6-acetyllysine" evidence="1">
    <location>
        <position position="14"/>
    </location>
</feature>
<feature type="modified residue" description="Omega-N-methylarginine" evidence="3">
    <location>
        <position position="97"/>
    </location>
</feature>
<feature type="modified residue" description="N6-acetyllysine" evidence="1">
    <location>
        <position position="106"/>
    </location>
</feature>
<feature type="modified residue" description="N6-acetyllysine" evidence="3">
    <location>
        <position position="259"/>
    </location>
</feature>
<feature type="modified residue" description="Phosphothreonine" evidence="1">
    <location>
        <position position="266"/>
    </location>
</feature>
<feature type="modified residue" description="Phosphoserine" evidence="2">
    <location>
        <position position="290"/>
    </location>
</feature>
<feature type="modified residue" description="Phosphoserine" evidence="1">
    <location>
        <position position="295"/>
    </location>
</feature>
<feature type="modified residue" description="Citrulline" evidence="3">
    <location>
        <position position="300"/>
    </location>
</feature>
<feature type="modified residue" description="N6-acetyllysine" evidence="1">
    <location>
        <position position="333"/>
    </location>
</feature>
<feature type="modified residue" description="N6-acetyllysine" evidence="3">
    <location>
        <position position="353"/>
    </location>
</feature>
<feature type="modified residue" description="N6-acetyllysine; alternate" evidence="3">
    <location>
        <position position="364"/>
    </location>
</feature>
<feature type="modified residue" description="Phosphoserine" evidence="1">
    <location>
        <position position="365"/>
    </location>
</feature>
<feature type="cross-link" description="Glycyl lysine isopeptide (Lys-Gly) (interchain with G-Cter in SUMO2)" evidence="1">
    <location>
        <position position="239"/>
    </location>
</feature>
<feature type="cross-link" description="Glycyl lysine isopeptide (Lys-Gly) (interchain with G-Cter in SUMO2)" evidence="1">
    <location>
        <position position="327"/>
    </location>
</feature>
<feature type="cross-link" description="Glycyl lysine isopeptide (Lys-Gly) (interchain with G-Cter in SUMO1); alternate" evidence="1">
    <location>
        <position position="364"/>
    </location>
</feature>
<comment type="function">
    <text evidence="1">Component of the large ribosomal subunit. The ribosome is a large ribonucleoprotein complex responsible for the synthesis of proteins in the cell.</text>
</comment>
<comment type="subunit">
    <text evidence="1 2">Component of the large ribosomal subunit. May bind IPO9 with low affinity (By similarity). Interacts with RBM3 (By similarity).</text>
</comment>
<comment type="subcellular location">
    <subcellularLocation>
        <location evidence="1">Cytoplasm</location>
    </subcellularLocation>
</comment>
<comment type="PTM">
    <text evidence="3">Citrullinated by PADI4.</text>
</comment>
<comment type="similarity">
    <text evidence="5">Belongs to the universal ribosomal protein uL4 family.</text>
</comment>
<gene>
    <name type="primary">RPL4</name>
</gene>
<keyword id="KW-0007">Acetylation</keyword>
<keyword id="KW-0164">Citrullination</keyword>
<keyword id="KW-0963">Cytoplasm</keyword>
<keyword id="KW-1017">Isopeptide bond</keyword>
<keyword id="KW-0488">Methylation</keyword>
<keyword id="KW-0597">Phosphoprotein</keyword>
<keyword id="KW-1185">Reference proteome</keyword>
<keyword id="KW-0687">Ribonucleoprotein</keyword>
<keyword id="KW-0689">Ribosomal protein</keyword>
<keyword id="KW-0832">Ubl conjugation</keyword>
<organism>
    <name type="scientific">Pongo abelii</name>
    <name type="common">Sumatran orangutan</name>
    <name type="synonym">Pongo pygmaeus abelii</name>
    <dbReference type="NCBI Taxonomy" id="9601"/>
    <lineage>
        <taxon>Eukaryota</taxon>
        <taxon>Metazoa</taxon>
        <taxon>Chordata</taxon>
        <taxon>Craniata</taxon>
        <taxon>Vertebrata</taxon>
        <taxon>Euteleostomi</taxon>
        <taxon>Mammalia</taxon>
        <taxon>Eutheria</taxon>
        <taxon>Euarchontoglires</taxon>
        <taxon>Primates</taxon>
        <taxon>Haplorrhini</taxon>
        <taxon>Catarrhini</taxon>
        <taxon>Hominidae</taxon>
        <taxon>Pongo</taxon>
    </lineage>
</organism>
<evidence type="ECO:0000250" key="1">
    <source>
        <dbReference type="UniProtKB" id="P36578"/>
    </source>
</evidence>
<evidence type="ECO:0000250" key="2">
    <source>
        <dbReference type="UniProtKB" id="P50878"/>
    </source>
</evidence>
<evidence type="ECO:0000250" key="3">
    <source>
        <dbReference type="UniProtKB" id="Q9D8E6"/>
    </source>
</evidence>
<evidence type="ECO:0000256" key="4">
    <source>
        <dbReference type="SAM" id="MobiDB-lite"/>
    </source>
</evidence>
<evidence type="ECO:0000305" key="5"/>
<sequence length="427" mass="47667">MACARPLISVYSEKGESSGKNVTLPAVFKAPIRPDIVNFVHTNLRKNNRQPYAVSELAGHQTSAESWGTGRAVARIPRVRGGGTHRSGQGAFGNMCRGGRMFAPTKTWRRWHRRVNTTQKRYAICSALAASALPALVMSKGHRIEEVPELPLVVEDKVEGYKKTKEAVLLLKKLKARNDIKKVYASQRMRAGKGKMRNRRRIQRRGPCIIYNEDNGIIKAFRNIPGITLLNVSKLNILKLAPGGHVGRFCIWTESAFRKLDELYGTWRKAASLKSNYNLPMHKMINTDLSRILKSPEIQRALRAPRKKIHRRVLKKNPLKNLRIMLKLNPYAKTMRRNTILRQARNHKLRVDKAAAAAAALQAKSDEKAAVAGKKPVVGKKGKKAAVGVKKQKKPLVGKKAAATKKPAPEKKPAEKKPTTEEKKPAA</sequence>
<reference key="1">
    <citation type="submission" date="2004-11" db="EMBL/GenBank/DDBJ databases">
        <authorList>
            <consortium name="The German cDNA consortium"/>
        </authorList>
    </citation>
    <scope>NUCLEOTIDE SEQUENCE [LARGE SCALE MRNA]</scope>
    <source>
        <tissue>Heart</tissue>
    </source>
</reference>
<protein>
    <recommendedName>
        <fullName evidence="5">Large ribosomal subunit protein uL4</fullName>
    </recommendedName>
    <alternativeName>
        <fullName>60S ribosomal protein L4</fullName>
    </alternativeName>
</protein>
<accession>Q5RCR3</accession>
<proteinExistence type="evidence at transcript level"/>
<name>RL4_PONAB</name>
<dbReference type="EMBL" id="CR858206">
    <property type="protein sequence ID" value="CAH90444.1"/>
    <property type="molecule type" value="mRNA"/>
</dbReference>
<dbReference type="RefSeq" id="NP_001125225.1">
    <property type="nucleotide sequence ID" value="NM_001131753.1"/>
</dbReference>
<dbReference type="SMR" id="Q5RCR3"/>
<dbReference type="FunCoup" id="Q5RCR3">
    <property type="interactions" value="2143"/>
</dbReference>
<dbReference type="STRING" id="9601.ENSPPYP00000015792"/>
<dbReference type="GeneID" id="100172118"/>
<dbReference type="KEGG" id="pon:100172118"/>
<dbReference type="CTD" id="6124"/>
<dbReference type="eggNOG" id="KOG1475">
    <property type="taxonomic scope" value="Eukaryota"/>
</dbReference>
<dbReference type="InParanoid" id="Q5RCR3"/>
<dbReference type="OrthoDB" id="9535260at2759"/>
<dbReference type="Proteomes" id="UP000001595">
    <property type="component" value="Unplaced"/>
</dbReference>
<dbReference type="GO" id="GO:0005737">
    <property type="term" value="C:cytoplasm"/>
    <property type="evidence" value="ECO:0007669"/>
    <property type="project" value="UniProtKB-SubCell"/>
</dbReference>
<dbReference type="GO" id="GO:1990904">
    <property type="term" value="C:ribonucleoprotein complex"/>
    <property type="evidence" value="ECO:0007669"/>
    <property type="project" value="UniProtKB-KW"/>
</dbReference>
<dbReference type="GO" id="GO:0005840">
    <property type="term" value="C:ribosome"/>
    <property type="evidence" value="ECO:0007669"/>
    <property type="project" value="UniProtKB-KW"/>
</dbReference>
<dbReference type="GO" id="GO:0003735">
    <property type="term" value="F:structural constituent of ribosome"/>
    <property type="evidence" value="ECO:0007669"/>
    <property type="project" value="InterPro"/>
</dbReference>
<dbReference type="GO" id="GO:0006412">
    <property type="term" value="P:translation"/>
    <property type="evidence" value="ECO:0007669"/>
    <property type="project" value="InterPro"/>
</dbReference>
<dbReference type="FunFam" id="3.40.1370.10:FF:000002">
    <property type="entry name" value="60S ribosomal protein L4"/>
    <property type="match status" value="1"/>
</dbReference>
<dbReference type="Gene3D" id="3.40.1370.10">
    <property type="match status" value="1"/>
</dbReference>
<dbReference type="InterPro" id="IPR025755">
    <property type="entry name" value="Ribos_uL4_C_dom"/>
</dbReference>
<dbReference type="InterPro" id="IPR002136">
    <property type="entry name" value="Ribosomal_uL4"/>
</dbReference>
<dbReference type="InterPro" id="IPR023574">
    <property type="entry name" value="Ribosomal_uL4_dom_sf"/>
</dbReference>
<dbReference type="InterPro" id="IPR013000">
    <property type="entry name" value="Ribosomal_uL4_euk/arc_CS"/>
</dbReference>
<dbReference type="InterPro" id="IPR045240">
    <property type="entry name" value="Ribosomal_uL4_euk/arch"/>
</dbReference>
<dbReference type="PANTHER" id="PTHR19431">
    <property type="entry name" value="60S RIBOSOMAL PROTEIN L4"/>
    <property type="match status" value="1"/>
</dbReference>
<dbReference type="Pfam" id="PF14374">
    <property type="entry name" value="Ribos_L4_asso_C"/>
    <property type="match status" value="1"/>
</dbReference>
<dbReference type="Pfam" id="PF00573">
    <property type="entry name" value="Ribosomal_L4"/>
    <property type="match status" value="1"/>
</dbReference>
<dbReference type="SUPFAM" id="SSF52166">
    <property type="entry name" value="Ribosomal protein L4"/>
    <property type="match status" value="1"/>
</dbReference>
<dbReference type="PROSITE" id="PS00939">
    <property type="entry name" value="RIBOSOMAL_L1E"/>
    <property type="match status" value="1"/>
</dbReference>